<sequence>MATKIRLARAGAKKRPFYQVVVADERSRRDGRFIENMGTYDPTKNPAVFKLNEEKILAWLSKGAQPTDTVRQLLKKAGILDKATA</sequence>
<reference key="1">
    <citation type="submission" date="2006-10" db="EMBL/GenBank/DDBJ databases">
        <title>Complete sequence of chromosome of Pelobacter propionicus DSM 2379.</title>
        <authorList>
            <consortium name="US DOE Joint Genome Institute"/>
            <person name="Copeland A."/>
            <person name="Lucas S."/>
            <person name="Lapidus A."/>
            <person name="Barry K."/>
            <person name="Detter J.C."/>
            <person name="Glavina del Rio T."/>
            <person name="Hammon N."/>
            <person name="Israni S."/>
            <person name="Dalin E."/>
            <person name="Tice H."/>
            <person name="Pitluck S."/>
            <person name="Saunders E."/>
            <person name="Brettin T."/>
            <person name="Bruce D."/>
            <person name="Han C."/>
            <person name="Tapia R."/>
            <person name="Schmutz J."/>
            <person name="Larimer F."/>
            <person name="Land M."/>
            <person name="Hauser L."/>
            <person name="Kyrpides N."/>
            <person name="Kim E."/>
            <person name="Lovley D."/>
            <person name="Richardson P."/>
        </authorList>
    </citation>
    <scope>NUCLEOTIDE SEQUENCE [LARGE SCALE GENOMIC DNA]</scope>
    <source>
        <strain>DSM 2379 / NBRC 103807 / OttBd1</strain>
    </source>
</reference>
<dbReference type="EMBL" id="CP000482">
    <property type="protein sequence ID" value="ABK98723.1"/>
    <property type="molecule type" value="Genomic_DNA"/>
</dbReference>
<dbReference type="RefSeq" id="WP_011735027.1">
    <property type="nucleotide sequence ID" value="NC_008609.1"/>
</dbReference>
<dbReference type="SMR" id="A1AN03"/>
<dbReference type="STRING" id="338966.Ppro_1098"/>
<dbReference type="KEGG" id="ppd:Ppro_1098"/>
<dbReference type="eggNOG" id="COG0228">
    <property type="taxonomic scope" value="Bacteria"/>
</dbReference>
<dbReference type="HOGENOM" id="CLU_100590_5_0_7"/>
<dbReference type="OrthoDB" id="9807878at2"/>
<dbReference type="Proteomes" id="UP000006732">
    <property type="component" value="Chromosome"/>
</dbReference>
<dbReference type="GO" id="GO:0005737">
    <property type="term" value="C:cytoplasm"/>
    <property type="evidence" value="ECO:0007669"/>
    <property type="project" value="UniProtKB-ARBA"/>
</dbReference>
<dbReference type="GO" id="GO:0015935">
    <property type="term" value="C:small ribosomal subunit"/>
    <property type="evidence" value="ECO:0007669"/>
    <property type="project" value="TreeGrafter"/>
</dbReference>
<dbReference type="GO" id="GO:0003735">
    <property type="term" value="F:structural constituent of ribosome"/>
    <property type="evidence" value="ECO:0007669"/>
    <property type="project" value="InterPro"/>
</dbReference>
<dbReference type="GO" id="GO:0006412">
    <property type="term" value="P:translation"/>
    <property type="evidence" value="ECO:0007669"/>
    <property type="project" value="UniProtKB-UniRule"/>
</dbReference>
<dbReference type="Gene3D" id="3.30.1320.10">
    <property type="match status" value="1"/>
</dbReference>
<dbReference type="HAMAP" id="MF_00385">
    <property type="entry name" value="Ribosomal_bS16"/>
    <property type="match status" value="1"/>
</dbReference>
<dbReference type="InterPro" id="IPR000307">
    <property type="entry name" value="Ribosomal_bS16"/>
</dbReference>
<dbReference type="InterPro" id="IPR020592">
    <property type="entry name" value="Ribosomal_bS16_CS"/>
</dbReference>
<dbReference type="InterPro" id="IPR023803">
    <property type="entry name" value="Ribosomal_bS16_dom_sf"/>
</dbReference>
<dbReference type="NCBIfam" id="TIGR00002">
    <property type="entry name" value="S16"/>
    <property type="match status" value="1"/>
</dbReference>
<dbReference type="PANTHER" id="PTHR12919">
    <property type="entry name" value="30S RIBOSOMAL PROTEIN S16"/>
    <property type="match status" value="1"/>
</dbReference>
<dbReference type="PANTHER" id="PTHR12919:SF20">
    <property type="entry name" value="SMALL RIBOSOMAL SUBUNIT PROTEIN BS16M"/>
    <property type="match status" value="1"/>
</dbReference>
<dbReference type="Pfam" id="PF00886">
    <property type="entry name" value="Ribosomal_S16"/>
    <property type="match status" value="1"/>
</dbReference>
<dbReference type="SUPFAM" id="SSF54565">
    <property type="entry name" value="Ribosomal protein S16"/>
    <property type="match status" value="1"/>
</dbReference>
<dbReference type="PROSITE" id="PS00732">
    <property type="entry name" value="RIBOSOMAL_S16"/>
    <property type="match status" value="1"/>
</dbReference>
<organism>
    <name type="scientific">Pelobacter propionicus (strain DSM 2379 / NBRC 103807 / OttBd1)</name>
    <dbReference type="NCBI Taxonomy" id="338966"/>
    <lineage>
        <taxon>Bacteria</taxon>
        <taxon>Pseudomonadati</taxon>
        <taxon>Thermodesulfobacteriota</taxon>
        <taxon>Desulfuromonadia</taxon>
        <taxon>Desulfuromonadales</taxon>
        <taxon>Desulfuromonadaceae</taxon>
        <taxon>Pelobacter</taxon>
    </lineage>
</organism>
<comment type="similarity">
    <text evidence="1">Belongs to the bacterial ribosomal protein bS16 family.</text>
</comment>
<proteinExistence type="inferred from homology"/>
<name>RS16_PELPD</name>
<protein>
    <recommendedName>
        <fullName evidence="1">Small ribosomal subunit protein bS16</fullName>
    </recommendedName>
    <alternativeName>
        <fullName evidence="2">30S ribosomal protein S16</fullName>
    </alternativeName>
</protein>
<gene>
    <name evidence="1" type="primary">rpsP</name>
    <name type="ordered locus">Ppro_1098</name>
</gene>
<keyword id="KW-1185">Reference proteome</keyword>
<keyword id="KW-0687">Ribonucleoprotein</keyword>
<keyword id="KW-0689">Ribosomal protein</keyword>
<feature type="chain" id="PRO_1000049310" description="Small ribosomal subunit protein bS16">
    <location>
        <begin position="1"/>
        <end position="85"/>
    </location>
</feature>
<evidence type="ECO:0000255" key="1">
    <source>
        <dbReference type="HAMAP-Rule" id="MF_00385"/>
    </source>
</evidence>
<evidence type="ECO:0000305" key="2"/>
<accession>A1AN03</accession>